<feature type="signal peptide" evidence="1">
    <location>
        <begin position="1"/>
        <end position="21"/>
    </location>
</feature>
<feature type="chain" id="PRO_0000016488" description="T-cell surface glycoprotein CD3 delta chain">
    <location>
        <begin position="22"/>
        <end position="171"/>
    </location>
</feature>
<feature type="topological domain" description="Extracellular" evidence="3">
    <location>
        <begin position="22"/>
        <end position="105"/>
    </location>
</feature>
<feature type="transmembrane region" description="Helical" evidence="3">
    <location>
        <begin position="106"/>
        <end position="126"/>
    </location>
</feature>
<feature type="topological domain" description="Cytoplasmic" evidence="3">
    <location>
        <begin position="127"/>
        <end position="171"/>
    </location>
</feature>
<feature type="domain" description="ITAM" evidence="4">
    <location>
        <begin position="138"/>
        <end position="166"/>
    </location>
</feature>
<feature type="modified residue" description="Phosphotyrosine" evidence="2 4">
    <location>
        <position position="149"/>
    </location>
</feature>
<feature type="modified residue" description="Phosphotyrosine" evidence="2 4">
    <location>
        <position position="160"/>
    </location>
</feature>
<feature type="glycosylation site" description="N-linked (GlcNAc...) asparagine" evidence="3">
    <location>
        <position position="38"/>
    </location>
</feature>
<feature type="glycosylation site" description="N-linked (GlcNAc...) asparagine" evidence="3">
    <location>
        <position position="54"/>
    </location>
</feature>
<feature type="glycosylation site" description="N-linked (GlcNAc...) asparagine" evidence="3">
    <location>
        <position position="74"/>
    </location>
</feature>
<feature type="disulfide bond" evidence="1">
    <location>
        <begin position="37"/>
        <end position="73"/>
    </location>
</feature>
<dbReference type="EMBL" id="AB073991">
    <property type="protein sequence ID" value="BAB71847.1"/>
    <property type="molecule type" value="mRNA"/>
</dbReference>
<dbReference type="RefSeq" id="NP_001274617.1">
    <property type="nucleotide sequence ID" value="NM_001287688.1"/>
</dbReference>
<dbReference type="SMR" id="Q95LI8"/>
<dbReference type="STRING" id="9541.ENSMFAP00000028609"/>
<dbReference type="GlyCosmos" id="Q95LI8">
    <property type="glycosylation" value="3 sites, No reported glycans"/>
</dbReference>
<dbReference type="VEuPathDB" id="HostDB:ENSMFAG00000045644"/>
<dbReference type="eggNOG" id="ENOG502S4XC">
    <property type="taxonomic scope" value="Eukaryota"/>
</dbReference>
<dbReference type="OMA" id="YQPLRDH"/>
<dbReference type="Proteomes" id="UP000233100">
    <property type="component" value="Chromosome 14"/>
</dbReference>
<dbReference type="GO" id="GO:0042105">
    <property type="term" value="C:alpha-beta T cell receptor complex"/>
    <property type="evidence" value="ECO:0007669"/>
    <property type="project" value="TreeGrafter"/>
</dbReference>
<dbReference type="GO" id="GO:0009897">
    <property type="term" value="C:external side of plasma membrane"/>
    <property type="evidence" value="ECO:0007669"/>
    <property type="project" value="TreeGrafter"/>
</dbReference>
<dbReference type="GO" id="GO:0004888">
    <property type="term" value="F:transmembrane signaling receptor activity"/>
    <property type="evidence" value="ECO:0007669"/>
    <property type="project" value="InterPro"/>
</dbReference>
<dbReference type="GO" id="GO:0002250">
    <property type="term" value="P:adaptive immune response"/>
    <property type="evidence" value="ECO:0007669"/>
    <property type="project" value="UniProtKB-KW"/>
</dbReference>
<dbReference type="GO" id="GO:0007166">
    <property type="term" value="P:cell surface receptor signaling pathway"/>
    <property type="evidence" value="ECO:0007669"/>
    <property type="project" value="InterPro"/>
</dbReference>
<dbReference type="GO" id="GO:0045059">
    <property type="term" value="P:positive thymic T cell selection"/>
    <property type="evidence" value="ECO:0000250"/>
    <property type="project" value="UniProtKB"/>
</dbReference>
<dbReference type="CDD" id="cd07691">
    <property type="entry name" value="IgC1_CD3_gamma_delta"/>
    <property type="match status" value="1"/>
</dbReference>
<dbReference type="FunFam" id="2.60.40.10:FF:001361">
    <property type="entry name" value="T-cell surface glycoprotein CD3 delta chain"/>
    <property type="match status" value="1"/>
</dbReference>
<dbReference type="Gene3D" id="2.60.40.10">
    <property type="entry name" value="Immunoglobulins"/>
    <property type="match status" value="1"/>
</dbReference>
<dbReference type="Gene3D" id="1.10.287.770">
    <property type="entry name" value="YojJ-like"/>
    <property type="match status" value="1"/>
</dbReference>
<dbReference type="InterPro" id="IPR015484">
    <property type="entry name" value="CD3_esu/gsu/dsu"/>
</dbReference>
<dbReference type="InterPro" id="IPR036179">
    <property type="entry name" value="Ig-like_dom_sf"/>
</dbReference>
<dbReference type="InterPro" id="IPR013783">
    <property type="entry name" value="Ig-like_fold"/>
</dbReference>
<dbReference type="InterPro" id="IPR032052">
    <property type="entry name" value="Ig_4"/>
</dbReference>
<dbReference type="InterPro" id="IPR003110">
    <property type="entry name" value="Phos_immunorcpt_sig_ITAM"/>
</dbReference>
<dbReference type="PANTHER" id="PTHR10570:SF5">
    <property type="entry name" value="T-CELL SURFACE GLYCOPROTEIN CD3 DELTA CHAIN"/>
    <property type="match status" value="1"/>
</dbReference>
<dbReference type="PANTHER" id="PTHR10570">
    <property type="entry name" value="T-CELL SURFACE GLYCOPROTEIN CD3 GAMMA CHAIN / DELTA CHAIN"/>
    <property type="match status" value="1"/>
</dbReference>
<dbReference type="Pfam" id="PF16680">
    <property type="entry name" value="Ig_4"/>
    <property type="match status" value="1"/>
</dbReference>
<dbReference type="Pfam" id="PF02189">
    <property type="entry name" value="ITAM"/>
    <property type="match status" value="1"/>
</dbReference>
<dbReference type="SMART" id="SM00077">
    <property type="entry name" value="ITAM"/>
    <property type="match status" value="1"/>
</dbReference>
<dbReference type="SUPFAM" id="SSF48726">
    <property type="entry name" value="Immunoglobulin"/>
    <property type="match status" value="1"/>
</dbReference>
<dbReference type="PROSITE" id="PS51055">
    <property type="entry name" value="ITAM_1"/>
    <property type="match status" value="1"/>
</dbReference>
<protein>
    <recommendedName>
        <fullName>T-cell surface glycoprotein CD3 delta chain</fullName>
    </recommendedName>
    <alternativeName>
        <fullName>T-cell receptor T3 delta chain</fullName>
    </alternativeName>
    <cdAntigenName>CD3d</cdAntigenName>
</protein>
<keyword id="KW-1064">Adaptive immunity</keyword>
<keyword id="KW-1003">Cell membrane</keyword>
<keyword id="KW-1015">Disulfide bond</keyword>
<keyword id="KW-0325">Glycoprotein</keyword>
<keyword id="KW-0391">Immunity</keyword>
<keyword id="KW-0472">Membrane</keyword>
<keyword id="KW-0597">Phosphoprotein</keyword>
<keyword id="KW-0675">Receptor</keyword>
<keyword id="KW-1185">Reference proteome</keyword>
<keyword id="KW-0732">Signal</keyword>
<keyword id="KW-0812">Transmembrane</keyword>
<keyword id="KW-1133">Transmembrane helix</keyword>
<reference key="1">
    <citation type="journal article" date="2001" name="J. Med. Primatol.">
        <title>CD3 polymorphism in cynomolgus monkeys (Macaca fascicularis).</title>
        <authorList>
            <person name="Uda A."/>
            <person name="Tanabayashi K."/>
            <person name="Mukai R."/>
            <person name="Yachi M."/>
            <person name="Nam K."/>
            <person name="Yamada A."/>
        </authorList>
    </citation>
    <scope>NUCLEOTIDE SEQUENCE [MRNA]</scope>
</reference>
<comment type="function">
    <text evidence="2">Part of the TCR-CD3 complex present on T-lymphocyte cell surface that plays an essential role in adaptive immune response. When antigen presenting cells (APCs) activate T-cell receptor (TCR), TCR-mediated signals are transmitted across the cell membrane by the CD3 chains CD3D, CD3E, CD3G and CD3Z. All CD3 chains contain immunoreceptor tyrosine-based activation motifs (ITAMs) in their cytoplasmic domain. Upon TCR engagement, these motifs become phosphorylated by Src family protein tyrosine kinases LCK and FYN, resulting in the activation of downstream signaling pathways. In addition of this role of signal transduction in T-cell activation, CD3D plays an essential role in thymocyte differentiation. Indeed, participates in correct intracellular TCR-CD3 complex assembly and surface expression. In absence of a functional TCR-CD3 complex, thymocytes are unable to differentiate properly. Interacts with CD4 and CD8 and thus serves to establish a functional link between the TCR and coreceptors CD4 and CD8, which is needed for activation and positive selection of CD4 or CD8 T-cells.</text>
</comment>
<comment type="subunit">
    <text evidence="2">The TCR-CD3 complex is composed of a CD3D/CD3E and a CD3G/CD3E heterodimers that preferentially associate with TCRalpha and TCRbeta, respectively, to form TCRalpha/CD3E/CD3G and TCRbeta/CD3G/CD3E trimers. In turn, the hexamer interacts with CD3Z homodimer to form the TCR-CD3 complex. Alternatively, TCRalpha and TCRbeta can be replaced by TCRgamma and TCRdelta. Interacts with coreceptors CD4 and CD8.</text>
</comment>
<comment type="subcellular location">
    <subcellularLocation>
        <location evidence="2">Cell membrane</location>
        <topology evidence="2">Single-pass type I membrane protein</topology>
    </subcellularLocation>
</comment>
<comment type="tissue specificity">
    <text evidence="2">CD3D is mostly present on T-lymphocytes with its TCR-CD3 partners. Present also in fetal NK-cells.</text>
</comment>
<comment type="PTM">
    <text evidence="2">Phosphorylated on Tyr residues after T-cell receptor triggering by LCK in association with CD4/CD8.</text>
</comment>
<organism>
    <name type="scientific">Macaca fascicularis</name>
    <name type="common">Crab-eating macaque</name>
    <name type="synonym">Cynomolgus monkey</name>
    <dbReference type="NCBI Taxonomy" id="9541"/>
    <lineage>
        <taxon>Eukaryota</taxon>
        <taxon>Metazoa</taxon>
        <taxon>Chordata</taxon>
        <taxon>Craniata</taxon>
        <taxon>Vertebrata</taxon>
        <taxon>Euteleostomi</taxon>
        <taxon>Mammalia</taxon>
        <taxon>Eutheria</taxon>
        <taxon>Euarchontoglires</taxon>
        <taxon>Primates</taxon>
        <taxon>Haplorrhini</taxon>
        <taxon>Catarrhini</taxon>
        <taxon>Cercopithecidae</taxon>
        <taxon>Cercopithecinae</taxon>
        <taxon>Macaca</taxon>
    </lineage>
</organism>
<name>CD3D_MACFA</name>
<proteinExistence type="evidence at transcript level"/>
<accession>Q95LI8</accession>
<gene>
    <name type="primary">CD3D</name>
</gene>
<sequence>MEHSTFLSGLVLATLLSQVSPFKIPVEELEDRVFVKCNTSVTWVEGTVGTLLTNNTRLDLGKRILDPRGIYRCNGTDIYKDKESAVQVHYRMCQNCVELDPATLAGIIVTDVIATLLLALGVFCFAGHETGRLSGAADTQALLRNDQVYQPLRDRDDAQYSRLGGNWARNK</sequence>
<evidence type="ECO:0000250" key="1"/>
<evidence type="ECO:0000250" key="2">
    <source>
        <dbReference type="UniProtKB" id="P04234"/>
    </source>
</evidence>
<evidence type="ECO:0000255" key="3"/>
<evidence type="ECO:0000255" key="4">
    <source>
        <dbReference type="PROSITE-ProRule" id="PRU00379"/>
    </source>
</evidence>